<proteinExistence type="inferred from homology"/>
<dbReference type="EC" id="6.1.1.19" evidence="1"/>
<dbReference type="EMBL" id="CP001150">
    <property type="protein sequence ID" value="ACM01122.1"/>
    <property type="molecule type" value="Genomic_DNA"/>
</dbReference>
<dbReference type="RefSeq" id="WP_015920626.1">
    <property type="nucleotide sequence ID" value="NC_011963.1"/>
</dbReference>
<dbReference type="SMR" id="B9KSX6"/>
<dbReference type="GeneID" id="67446684"/>
<dbReference type="KEGG" id="rsk:RSKD131_1262"/>
<dbReference type="HOGENOM" id="CLU_006406_0_1_5"/>
<dbReference type="GO" id="GO:0005737">
    <property type="term" value="C:cytoplasm"/>
    <property type="evidence" value="ECO:0007669"/>
    <property type="project" value="UniProtKB-SubCell"/>
</dbReference>
<dbReference type="GO" id="GO:0004814">
    <property type="term" value="F:arginine-tRNA ligase activity"/>
    <property type="evidence" value="ECO:0007669"/>
    <property type="project" value="UniProtKB-UniRule"/>
</dbReference>
<dbReference type="GO" id="GO:0005524">
    <property type="term" value="F:ATP binding"/>
    <property type="evidence" value="ECO:0007669"/>
    <property type="project" value="UniProtKB-UniRule"/>
</dbReference>
<dbReference type="GO" id="GO:0006420">
    <property type="term" value="P:arginyl-tRNA aminoacylation"/>
    <property type="evidence" value="ECO:0007669"/>
    <property type="project" value="UniProtKB-UniRule"/>
</dbReference>
<dbReference type="CDD" id="cd00671">
    <property type="entry name" value="ArgRS_core"/>
    <property type="match status" value="1"/>
</dbReference>
<dbReference type="FunFam" id="3.40.50.620:FF:000062">
    <property type="entry name" value="Arginine--tRNA ligase"/>
    <property type="match status" value="1"/>
</dbReference>
<dbReference type="Gene3D" id="3.30.1360.70">
    <property type="entry name" value="Arginyl tRNA synthetase N-terminal domain"/>
    <property type="match status" value="1"/>
</dbReference>
<dbReference type="Gene3D" id="3.40.50.620">
    <property type="entry name" value="HUPs"/>
    <property type="match status" value="1"/>
</dbReference>
<dbReference type="Gene3D" id="1.10.730.10">
    <property type="entry name" value="Isoleucyl-tRNA Synthetase, Domain 1"/>
    <property type="match status" value="1"/>
</dbReference>
<dbReference type="HAMAP" id="MF_00123">
    <property type="entry name" value="Arg_tRNA_synth"/>
    <property type="match status" value="1"/>
</dbReference>
<dbReference type="InterPro" id="IPR001412">
    <property type="entry name" value="aa-tRNA-synth_I_CS"/>
</dbReference>
<dbReference type="InterPro" id="IPR001278">
    <property type="entry name" value="Arg-tRNA-ligase"/>
</dbReference>
<dbReference type="InterPro" id="IPR005148">
    <property type="entry name" value="Arg-tRNA-synth_N"/>
</dbReference>
<dbReference type="InterPro" id="IPR036695">
    <property type="entry name" value="Arg-tRNA-synth_N_sf"/>
</dbReference>
<dbReference type="InterPro" id="IPR035684">
    <property type="entry name" value="ArgRS_core"/>
</dbReference>
<dbReference type="InterPro" id="IPR008909">
    <property type="entry name" value="DALR_anticod-bd"/>
</dbReference>
<dbReference type="InterPro" id="IPR014729">
    <property type="entry name" value="Rossmann-like_a/b/a_fold"/>
</dbReference>
<dbReference type="InterPro" id="IPR009080">
    <property type="entry name" value="tRNAsynth_Ia_anticodon-bd"/>
</dbReference>
<dbReference type="NCBIfam" id="TIGR00456">
    <property type="entry name" value="argS"/>
    <property type="match status" value="1"/>
</dbReference>
<dbReference type="PANTHER" id="PTHR11956:SF5">
    <property type="entry name" value="ARGININE--TRNA LIGASE, CYTOPLASMIC"/>
    <property type="match status" value="1"/>
</dbReference>
<dbReference type="PANTHER" id="PTHR11956">
    <property type="entry name" value="ARGINYL-TRNA SYNTHETASE"/>
    <property type="match status" value="1"/>
</dbReference>
<dbReference type="Pfam" id="PF03485">
    <property type="entry name" value="Arg_tRNA_synt_N"/>
    <property type="match status" value="1"/>
</dbReference>
<dbReference type="Pfam" id="PF05746">
    <property type="entry name" value="DALR_1"/>
    <property type="match status" value="1"/>
</dbReference>
<dbReference type="Pfam" id="PF00750">
    <property type="entry name" value="tRNA-synt_1d"/>
    <property type="match status" value="1"/>
</dbReference>
<dbReference type="PRINTS" id="PR01038">
    <property type="entry name" value="TRNASYNTHARG"/>
</dbReference>
<dbReference type="SMART" id="SM01016">
    <property type="entry name" value="Arg_tRNA_synt_N"/>
    <property type="match status" value="1"/>
</dbReference>
<dbReference type="SMART" id="SM00836">
    <property type="entry name" value="DALR_1"/>
    <property type="match status" value="1"/>
</dbReference>
<dbReference type="SUPFAM" id="SSF47323">
    <property type="entry name" value="Anticodon-binding domain of a subclass of class I aminoacyl-tRNA synthetases"/>
    <property type="match status" value="1"/>
</dbReference>
<dbReference type="SUPFAM" id="SSF55190">
    <property type="entry name" value="Arginyl-tRNA synthetase (ArgRS), N-terminal 'additional' domain"/>
    <property type="match status" value="1"/>
</dbReference>
<dbReference type="SUPFAM" id="SSF52374">
    <property type="entry name" value="Nucleotidylyl transferase"/>
    <property type="match status" value="1"/>
</dbReference>
<dbReference type="PROSITE" id="PS00178">
    <property type="entry name" value="AA_TRNA_LIGASE_I"/>
    <property type="match status" value="1"/>
</dbReference>
<feature type="chain" id="PRO_1000198928" description="Arginine--tRNA ligase">
    <location>
        <begin position="1"/>
        <end position="580"/>
    </location>
</feature>
<feature type="short sequence motif" description="'HIGH' region">
    <location>
        <begin position="131"/>
        <end position="141"/>
    </location>
</feature>
<sequence>MNLFTEIRTLVTAELGAMTEAGDLPAGLDLSAVAVEPPRDPAHGDMSTNAAMVLAKPSGKPPRAIAEALATRLAADPRISSAEVAGPGFLNLRLRPAVWQGMVATILKAGDTYGRSTIGAGQKVNVEFVSANPTGPMHVGHVRGAVVGDALARLLAYAGWNVTREYYINDGGAQVDVLARSAFERYREAHGLEPEIREGLYPGDYLIPVGEALKAKYGDSLLDKGEQHWLTEVREFATEMMMQMIREDLAALGVEMDVYSSEKALYGTGKIEAALDRLKEMDLIYEGVLEPPKGKTPEDWEPREQTLFRSTAHGDDVDRPVKKSDGSWTYFAPDIAYHYDKVTRGFDQLIDIFGADHGGYVKRMKAAVAALSAGRVPLDIKLIQLVKLWKNGEPFKMSKRAGTYVTLRDVVEQVGTDVTRFVMLTRKNDATLDFDFDKVLEQSKENPVFYVQYANARINSVLRKAREQGMDVSDATLATADLDRLDHPAEIALIAKLAEWPRLVEIAARTNEPHRVAFYLHELASELHGLWNRGNDEAGLRFLQEDPVVSQAKIALARAVGVVICAGLGILGVTPVEEMR</sequence>
<evidence type="ECO:0000255" key="1">
    <source>
        <dbReference type="HAMAP-Rule" id="MF_00123"/>
    </source>
</evidence>
<comment type="catalytic activity">
    <reaction evidence="1">
        <text>tRNA(Arg) + L-arginine + ATP = L-arginyl-tRNA(Arg) + AMP + diphosphate</text>
        <dbReference type="Rhea" id="RHEA:20301"/>
        <dbReference type="Rhea" id="RHEA-COMP:9658"/>
        <dbReference type="Rhea" id="RHEA-COMP:9673"/>
        <dbReference type="ChEBI" id="CHEBI:30616"/>
        <dbReference type="ChEBI" id="CHEBI:32682"/>
        <dbReference type="ChEBI" id="CHEBI:33019"/>
        <dbReference type="ChEBI" id="CHEBI:78442"/>
        <dbReference type="ChEBI" id="CHEBI:78513"/>
        <dbReference type="ChEBI" id="CHEBI:456215"/>
        <dbReference type="EC" id="6.1.1.19"/>
    </reaction>
</comment>
<comment type="subunit">
    <text evidence="1">Monomer.</text>
</comment>
<comment type="subcellular location">
    <subcellularLocation>
        <location evidence="1">Cytoplasm</location>
    </subcellularLocation>
</comment>
<comment type="similarity">
    <text evidence="1">Belongs to the class-I aminoacyl-tRNA synthetase family.</text>
</comment>
<gene>
    <name evidence="1" type="primary">argS</name>
    <name type="ordered locus">RSKD131_1262</name>
</gene>
<accession>B9KSX6</accession>
<protein>
    <recommendedName>
        <fullName evidence="1">Arginine--tRNA ligase</fullName>
        <ecNumber evidence="1">6.1.1.19</ecNumber>
    </recommendedName>
    <alternativeName>
        <fullName evidence="1">Arginyl-tRNA synthetase</fullName>
        <shortName evidence="1">ArgRS</shortName>
    </alternativeName>
</protein>
<name>SYR_CERSK</name>
<reference key="1">
    <citation type="journal article" date="2009" name="J. Bacteriol.">
        <title>Complete genome sequence of Rhodobacter sphaeroides KD131.</title>
        <authorList>
            <person name="Lim S.-K."/>
            <person name="Kim S.J."/>
            <person name="Cha S.H."/>
            <person name="Oh Y.-K."/>
            <person name="Rhee H.-J."/>
            <person name="Kim M.-S."/>
            <person name="Lee J.K."/>
        </authorList>
    </citation>
    <scope>NUCLEOTIDE SEQUENCE [LARGE SCALE GENOMIC DNA]</scope>
    <source>
        <strain>KD131 / KCTC 12085</strain>
    </source>
</reference>
<organism>
    <name type="scientific">Cereibacter sphaeroides (strain KD131 / KCTC 12085)</name>
    <name type="common">Rhodobacter sphaeroides</name>
    <dbReference type="NCBI Taxonomy" id="557760"/>
    <lineage>
        <taxon>Bacteria</taxon>
        <taxon>Pseudomonadati</taxon>
        <taxon>Pseudomonadota</taxon>
        <taxon>Alphaproteobacteria</taxon>
        <taxon>Rhodobacterales</taxon>
        <taxon>Paracoccaceae</taxon>
        <taxon>Cereibacter</taxon>
    </lineage>
</organism>
<keyword id="KW-0030">Aminoacyl-tRNA synthetase</keyword>
<keyword id="KW-0067">ATP-binding</keyword>
<keyword id="KW-0963">Cytoplasm</keyword>
<keyword id="KW-0436">Ligase</keyword>
<keyword id="KW-0547">Nucleotide-binding</keyword>
<keyword id="KW-0648">Protein biosynthesis</keyword>